<reference key="1">
    <citation type="journal article" date="1998" name="Science">
        <title>Genome sequence of an obligate intracellular pathogen of humans: Chlamydia trachomatis.</title>
        <authorList>
            <person name="Stephens R.S."/>
            <person name="Kalman S."/>
            <person name="Lammel C.J."/>
            <person name="Fan J."/>
            <person name="Marathe R."/>
            <person name="Aravind L."/>
            <person name="Mitchell W.P."/>
            <person name="Olinger L."/>
            <person name="Tatusov R.L."/>
            <person name="Zhao Q."/>
            <person name="Koonin E.V."/>
            <person name="Davis R.W."/>
        </authorList>
    </citation>
    <scope>NUCLEOTIDE SEQUENCE [LARGE SCALE GENOMIC DNA]</scope>
    <source>
        <strain>ATCC VR-885 / DSM 19411 / UW-3/Cx</strain>
    </source>
</reference>
<reference key="2">
    <citation type="journal article" date="1991" name="J. Bacteriol.">
        <title>Purification and N-terminal amino acid sequences of Chlamydia trachomatis histone analogs.</title>
        <authorList>
            <person name="Hackstadt T."/>
        </authorList>
    </citation>
    <scope>PROTEIN SEQUENCE OF 2-38</scope>
    <source>
        <strain>L2</strain>
    </source>
</reference>
<name>HCT1_CHLTR</name>
<comment type="function">
    <text>Might have a role analogous to that of eukaryotic histone proteins.</text>
</comment>
<comment type="developmental stage">
    <text>Specific to the EB (elementary body) form in the life cycle of chlamydiae.</text>
</comment>
<comment type="similarity">
    <text evidence="3">Belongs to the histone H1/H5 family. HCT subfamily.</text>
</comment>
<gene>
    <name type="primary">hctA</name>
    <name type="ordered locus">CT_743</name>
</gene>
<accession>P0CE15</accession>
<accession>O84748</accession>
<accession>Q02281</accession>
<accession>Q9R5S5</accession>
<feature type="initiator methionine" description="Removed" evidence="2">
    <location>
        <position position="1"/>
    </location>
</feature>
<feature type="chain" id="PRO_0000196019" description="Histone H1-like protein Hc1">
    <location>
        <begin position="2"/>
        <end position="125"/>
    </location>
</feature>
<feature type="region of interest" description="Disordered" evidence="1">
    <location>
        <begin position="98"/>
        <end position="125"/>
    </location>
</feature>
<feature type="compositionally biased region" description="Basic residues" evidence="1">
    <location>
        <begin position="100"/>
        <end position="125"/>
    </location>
</feature>
<dbReference type="EMBL" id="AE001273">
    <property type="protein sequence ID" value="AAC68338.1"/>
    <property type="molecule type" value="Genomic_DNA"/>
</dbReference>
<dbReference type="PIR" id="A39396">
    <property type="entry name" value="A39396"/>
</dbReference>
<dbReference type="PIR" id="A71477">
    <property type="entry name" value="A71477"/>
</dbReference>
<dbReference type="RefSeq" id="NP_220262.1">
    <property type="nucleotide sequence ID" value="NC_000117.1"/>
</dbReference>
<dbReference type="RefSeq" id="WP_009872121.1">
    <property type="nucleotide sequence ID" value="NC_000117.1"/>
</dbReference>
<dbReference type="SMR" id="P0CE15"/>
<dbReference type="STRING" id="272561.CT_743"/>
<dbReference type="EnsemblBacteria" id="AAC68338">
    <property type="protein sequence ID" value="AAC68338"/>
    <property type="gene ID" value="CT_743"/>
</dbReference>
<dbReference type="GeneID" id="884538"/>
<dbReference type="KEGG" id="ctr:CT_743"/>
<dbReference type="PATRIC" id="fig|272561.5.peg.817"/>
<dbReference type="HOGENOM" id="CLU_148744_0_0_0"/>
<dbReference type="InParanoid" id="P0CE15"/>
<dbReference type="OrthoDB" id="22023at2"/>
<dbReference type="Proteomes" id="UP000000431">
    <property type="component" value="Chromosome"/>
</dbReference>
<dbReference type="GO" id="GO:0003677">
    <property type="term" value="F:DNA binding"/>
    <property type="evidence" value="ECO:0007669"/>
    <property type="project" value="UniProtKB-KW"/>
</dbReference>
<dbReference type="GO" id="GO:0030527">
    <property type="term" value="F:structural constituent of chromatin"/>
    <property type="evidence" value="ECO:0007669"/>
    <property type="project" value="InterPro"/>
</dbReference>
<dbReference type="InterPro" id="IPR010886">
    <property type="entry name" value="Hc1"/>
</dbReference>
<dbReference type="Pfam" id="PF07432">
    <property type="entry name" value="Hc1"/>
    <property type="match status" value="1"/>
</dbReference>
<keyword id="KW-0903">Direct protein sequencing</keyword>
<keyword id="KW-0238">DNA-binding</keyword>
<keyword id="KW-1185">Reference proteome</keyword>
<keyword id="KW-0677">Repeat</keyword>
<organism>
    <name type="scientific">Chlamydia trachomatis serovar D (strain ATCC VR-885 / DSM 19411 / UW-3/Cx)</name>
    <dbReference type="NCBI Taxonomy" id="272561"/>
    <lineage>
        <taxon>Bacteria</taxon>
        <taxon>Pseudomonadati</taxon>
        <taxon>Chlamydiota</taxon>
        <taxon>Chlamydiia</taxon>
        <taxon>Chlamydiales</taxon>
        <taxon>Chlamydiaceae</taxon>
        <taxon>Chlamydia/Chlamydophila group</taxon>
        <taxon>Chlamydia</taxon>
    </lineage>
</organism>
<evidence type="ECO:0000256" key="1">
    <source>
        <dbReference type="SAM" id="MobiDB-lite"/>
    </source>
</evidence>
<evidence type="ECO:0000269" key="2">
    <source>
    </source>
</evidence>
<evidence type="ECO:0000305" key="3"/>
<protein>
    <recommendedName>
        <fullName>Histone H1-like protein Hc1</fullName>
    </recommendedName>
    <alternativeName>
        <fullName>18 kDa histone analog</fullName>
    </alternativeName>
</protein>
<sequence>MALKDTAKKMTDLLESIQQNLLKAEKGNKAAAQRVRTESIKLEKIAKVYRKESIKAEKMGLMKKSKAAAKKAKAAAKKPVRAAKTVAKKACTKRTCATKAKVKPTKKAAPKTKVKTAKKTRSTKK</sequence>
<proteinExistence type="evidence at protein level"/>